<comment type="function">
    <text evidence="1">Catalyzes carboxymethyl transfer from carboxy-S-adenosyl-L-methionine (Cx-SAM) to 5-hydroxyuridine (ho5U) to form 5-carboxymethoxyuridine (cmo5U) at position 34 in tRNAs.</text>
</comment>
<comment type="catalytic activity">
    <reaction evidence="1">
        <text>carboxy-S-adenosyl-L-methionine + 5-hydroxyuridine(34) in tRNA = 5-carboxymethoxyuridine(34) in tRNA + S-adenosyl-L-homocysteine + H(+)</text>
        <dbReference type="Rhea" id="RHEA:52848"/>
        <dbReference type="Rhea" id="RHEA-COMP:13381"/>
        <dbReference type="Rhea" id="RHEA-COMP:13383"/>
        <dbReference type="ChEBI" id="CHEBI:15378"/>
        <dbReference type="ChEBI" id="CHEBI:57856"/>
        <dbReference type="ChEBI" id="CHEBI:134278"/>
        <dbReference type="ChEBI" id="CHEBI:136877"/>
        <dbReference type="ChEBI" id="CHEBI:136879"/>
    </reaction>
</comment>
<comment type="subunit">
    <text evidence="1">Homotetramer.</text>
</comment>
<comment type="similarity">
    <text evidence="1">Belongs to the class I-like SAM-binding methyltransferase superfamily. CmoB family.</text>
</comment>
<proteinExistence type="inferred from homology"/>
<gene>
    <name evidence="1" type="primary">cmoB</name>
    <name type="ordered locus">HSM_0145</name>
</gene>
<organism>
    <name type="scientific">Histophilus somni (strain 2336)</name>
    <name type="common">Haemophilus somnus</name>
    <dbReference type="NCBI Taxonomy" id="228400"/>
    <lineage>
        <taxon>Bacteria</taxon>
        <taxon>Pseudomonadati</taxon>
        <taxon>Pseudomonadota</taxon>
        <taxon>Gammaproteobacteria</taxon>
        <taxon>Pasteurellales</taxon>
        <taxon>Pasteurellaceae</taxon>
        <taxon>Histophilus</taxon>
    </lineage>
</organism>
<protein>
    <recommendedName>
        <fullName evidence="1">tRNA U34 carboxymethyltransferase</fullName>
        <ecNumber evidence="1">2.5.1.-</ecNumber>
    </recommendedName>
</protein>
<feature type="chain" id="PRO_1000087968" description="tRNA U34 carboxymethyltransferase">
    <location>
        <begin position="1"/>
        <end position="321"/>
    </location>
</feature>
<feature type="binding site" evidence="1">
    <location>
        <position position="90"/>
    </location>
    <ligand>
        <name>carboxy-S-adenosyl-L-methionine</name>
        <dbReference type="ChEBI" id="CHEBI:134278"/>
    </ligand>
</feature>
<feature type="binding site" evidence="1">
    <location>
        <position position="104"/>
    </location>
    <ligand>
        <name>carboxy-S-adenosyl-L-methionine</name>
        <dbReference type="ChEBI" id="CHEBI:134278"/>
    </ligand>
</feature>
<feature type="binding site" evidence="1">
    <location>
        <position position="109"/>
    </location>
    <ligand>
        <name>carboxy-S-adenosyl-L-methionine</name>
        <dbReference type="ChEBI" id="CHEBI:134278"/>
    </ligand>
</feature>
<feature type="binding site" evidence="1">
    <location>
        <position position="129"/>
    </location>
    <ligand>
        <name>carboxy-S-adenosyl-L-methionine</name>
        <dbReference type="ChEBI" id="CHEBI:134278"/>
    </ligand>
</feature>
<feature type="binding site" evidence="1">
    <location>
        <begin position="151"/>
        <end position="153"/>
    </location>
    <ligand>
        <name>carboxy-S-adenosyl-L-methionine</name>
        <dbReference type="ChEBI" id="CHEBI:134278"/>
    </ligand>
</feature>
<feature type="binding site" evidence="1">
    <location>
        <begin position="180"/>
        <end position="181"/>
    </location>
    <ligand>
        <name>carboxy-S-adenosyl-L-methionine</name>
        <dbReference type="ChEBI" id="CHEBI:134278"/>
    </ligand>
</feature>
<feature type="binding site" evidence="1">
    <location>
        <position position="195"/>
    </location>
    <ligand>
        <name>carboxy-S-adenosyl-L-methionine</name>
        <dbReference type="ChEBI" id="CHEBI:134278"/>
    </ligand>
</feature>
<feature type="binding site" evidence="1">
    <location>
        <position position="199"/>
    </location>
    <ligand>
        <name>carboxy-S-adenosyl-L-methionine</name>
        <dbReference type="ChEBI" id="CHEBI:134278"/>
    </ligand>
</feature>
<feature type="binding site" evidence="1">
    <location>
        <position position="314"/>
    </location>
    <ligand>
        <name>carboxy-S-adenosyl-L-methionine</name>
        <dbReference type="ChEBI" id="CHEBI:134278"/>
    </ligand>
</feature>
<accession>B0UVK6</accession>
<sequence>MFDFRPFYQQIATSTLSAWLETLPLQLKQWEKQTHGDYIKWSKIIDFLPHLTADHIDLKSAVKAETKTPLSSGERQRIIHHLKQLMPWRKGPYHLYGIHIDCEWRSDFKWERVLPHLAPLQNRLVLDVGCGSGYHMWRMVGEGAKMVVGIDPTELFLCQFEAVRKLLNNDRRANLIPLGIEEMQPLAAFDTVFSMGVLYHRKSPLDHLTQLKNQLVKDGELVLETLVVEGDINTILVPTDRYAKMKNVYFIPSVLALINWLEKCGFHNIRCVDVETTGLEEQRKTDWLENESLIDFLNPQDHSKTIEGYPAPKRAVILANK</sequence>
<keyword id="KW-0808">Transferase</keyword>
<keyword id="KW-0819">tRNA processing</keyword>
<reference key="1">
    <citation type="submission" date="2008-02" db="EMBL/GenBank/DDBJ databases">
        <title>Complete sequence of Haemophilus somnus 2336.</title>
        <authorList>
            <consortium name="US DOE Joint Genome Institute"/>
            <person name="Siddaramappa S."/>
            <person name="Duncan A.J."/>
            <person name="Challacombe J.F."/>
            <person name="Rainey D."/>
            <person name="Gillaspy A.F."/>
            <person name="Carson M."/>
            <person name="Gipson J."/>
            <person name="Gipson M."/>
            <person name="Bruce D."/>
            <person name="Detter J.C."/>
            <person name="Han C.S."/>
            <person name="Land M."/>
            <person name="Tapia R."/>
            <person name="Thompson L.S."/>
            <person name="Orvis J."/>
            <person name="Zaitshik J."/>
            <person name="Barnes G."/>
            <person name="Brettin T.S."/>
            <person name="Dyer D.W."/>
            <person name="Inzana T.J."/>
        </authorList>
    </citation>
    <scope>NUCLEOTIDE SEQUENCE [LARGE SCALE GENOMIC DNA]</scope>
    <source>
        <strain>2336</strain>
    </source>
</reference>
<evidence type="ECO:0000255" key="1">
    <source>
        <dbReference type="HAMAP-Rule" id="MF_01590"/>
    </source>
</evidence>
<name>CMOB_HISS2</name>
<dbReference type="EC" id="2.5.1.-" evidence="1"/>
<dbReference type="EMBL" id="CP000947">
    <property type="protein sequence ID" value="ACA31196.1"/>
    <property type="molecule type" value="Genomic_DNA"/>
</dbReference>
<dbReference type="RefSeq" id="WP_012340593.1">
    <property type="nucleotide sequence ID" value="NC_010519.1"/>
</dbReference>
<dbReference type="SMR" id="B0UVK6"/>
<dbReference type="STRING" id="228400.HSM_0145"/>
<dbReference type="GeneID" id="31486423"/>
<dbReference type="KEGG" id="hsm:HSM_0145"/>
<dbReference type="HOGENOM" id="CLU_052665_0_0_6"/>
<dbReference type="GO" id="GO:0008168">
    <property type="term" value="F:methyltransferase activity"/>
    <property type="evidence" value="ECO:0007669"/>
    <property type="project" value="TreeGrafter"/>
</dbReference>
<dbReference type="GO" id="GO:0016765">
    <property type="term" value="F:transferase activity, transferring alkyl or aryl (other than methyl) groups"/>
    <property type="evidence" value="ECO:0007669"/>
    <property type="project" value="UniProtKB-UniRule"/>
</dbReference>
<dbReference type="GO" id="GO:0002098">
    <property type="term" value="P:tRNA wobble uridine modification"/>
    <property type="evidence" value="ECO:0007669"/>
    <property type="project" value="InterPro"/>
</dbReference>
<dbReference type="CDD" id="cd02440">
    <property type="entry name" value="AdoMet_MTases"/>
    <property type="match status" value="1"/>
</dbReference>
<dbReference type="Gene3D" id="3.40.50.150">
    <property type="entry name" value="Vaccinia Virus protein VP39"/>
    <property type="match status" value="1"/>
</dbReference>
<dbReference type="HAMAP" id="MF_01590">
    <property type="entry name" value="tRNA_carboxymethyltr_CmoB"/>
    <property type="match status" value="1"/>
</dbReference>
<dbReference type="InterPro" id="IPR010017">
    <property type="entry name" value="CmoB"/>
</dbReference>
<dbReference type="InterPro" id="IPR027555">
    <property type="entry name" value="Mo5U34_MeTrfas-like"/>
</dbReference>
<dbReference type="InterPro" id="IPR029063">
    <property type="entry name" value="SAM-dependent_MTases_sf"/>
</dbReference>
<dbReference type="NCBIfam" id="NF011650">
    <property type="entry name" value="PRK15068.1"/>
    <property type="match status" value="1"/>
</dbReference>
<dbReference type="NCBIfam" id="TIGR00452">
    <property type="entry name" value="tRNA 5-methoxyuridine(34)/uridine 5-oxyacetic acid(34) synthase CmoB"/>
    <property type="match status" value="1"/>
</dbReference>
<dbReference type="PANTHER" id="PTHR43464">
    <property type="entry name" value="METHYLTRANSFERASE"/>
    <property type="match status" value="1"/>
</dbReference>
<dbReference type="PANTHER" id="PTHR43464:SF95">
    <property type="entry name" value="TRNA U34 CARBOXYMETHYLTRANSFERASE"/>
    <property type="match status" value="1"/>
</dbReference>
<dbReference type="Pfam" id="PF08003">
    <property type="entry name" value="Methyltransf_9"/>
    <property type="match status" value="1"/>
</dbReference>
<dbReference type="SUPFAM" id="SSF53335">
    <property type="entry name" value="S-adenosyl-L-methionine-dependent methyltransferases"/>
    <property type="match status" value="1"/>
</dbReference>